<reference key="1">
    <citation type="journal article" date="2007" name="J. Bacteriol.">
        <title>The complete genome sequence of the lactic acid bacterial paradigm Lactococcus lactis subsp. cremoris MG1363.</title>
        <authorList>
            <person name="Wegmann U."/>
            <person name="O'Connell-Motherway M."/>
            <person name="Zomer A."/>
            <person name="Buist G."/>
            <person name="Shearman C."/>
            <person name="Canchaya C."/>
            <person name="Ventura M."/>
            <person name="Goesmann A."/>
            <person name="Gasson M.J."/>
            <person name="Kuipers O.P."/>
            <person name="van Sinderen D."/>
            <person name="Kok J."/>
        </authorList>
    </citation>
    <scope>NUCLEOTIDE SEQUENCE [LARGE SCALE GENOMIC DNA]</scope>
    <source>
        <strain>MG1363</strain>
    </source>
</reference>
<proteinExistence type="inferred from homology"/>
<feature type="chain" id="PRO_1000019711" description="Serine--tRNA ligase">
    <location>
        <begin position="1"/>
        <end position="423"/>
    </location>
</feature>
<feature type="binding site" evidence="1">
    <location>
        <begin position="231"/>
        <end position="233"/>
    </location>
    <ligand>
        <name>L-serine</name>
        <dbReference type="ChEBI" id="CHEBI:33384"/>
    </ligand>
</feature>
<feature type="binding site" evidence="1">
    <location>
        <begin position="262"/>
        <end position="264"/>
    </location>
    <ligand>
        <name>ATP</name>
        <dbReference type="ChEBI" id="CHEBI:30616"/>
    </ligand>
</feature>
<feature type="binding site" evidence="1">
    <location>
        <position position="285"/>
    </location>
    <ligand>
        <name>L-serine</name>
        <dbReference type="ChEBI" id="CHEBI:33384"/>
    </ligand>
</feature>
<feature type="binding site" evidence="1">
    <location>
        <begin position="349"/>
        <end position="352"/>
    </location>
    <ligand>
        <name>ATP</name>
        <dbReference type="ChEBI" id="CHEBI:30616"/>
    </ligand>
</feature>
<feature type="binding site" evidence="1">
    <location>
        <position position="384"/>
    </location>
    <ligand>
        <name>L-serine</name>
        <dbReference type="ChEBI" id="CHEBI:33384"/>
    </ligand>
</feature>
<organism>
    <name type="scientific">Lactococcus lactis subsp. cremoris (strain MG1363)</name>
    <dbReference type="NCBI Taxonomy" id="416870"/>
    <lineage>
        <taxon>Bacteria</taxon>
        <taxon>Bacillati</taxon>
        <taxon>Bacillota</taxon>
        <taxon>Bacilli</taxon>
        <taxon>Lactobacillales</taxon>
        <taxon>Streptococcaceae</taxon>
        <taxon>Lactococcus</taxon>
        <taxon>Lactococcus cremoris subsp. cremoris</taxon>
    </lineage>
</organism>
<keyword id="KW-0030">Aminoacyl-tRNA synthetase</keyword>
<keyword id="KW-0067">ATP-binding</keyword>
<keyword id="KW-0963">Cytoplasm</keyword>
<keyword id="KW-0436">Ligase</keyword>
<keyword id="KW-0547">Nucleotide-binding</keyword>
<keyword id="KW-0648">Protein biosynthesis</keyword>
<sequence>MLDIKKIRADFDGVAAKLATRGVEKEKLEKLHDLDIKRRELIVKSEALKAERNSVSDEISQVKRAKGDASTQIAAMQKVSAEIKAIDAELAEIEENLNEIIIMLPNLPHESTPIGADEDDNVEVRRVGQTPTFNFEPKAHWDLGEDLGILDWERGGKVTGSRFLFYKGAGARLERALYNFMLDEHGKEGYTEMITPYMVNQESMFGTGQYPKFKEDTFELKDDRGFVLIPTAEVPLTNYYRGEILDGSELPIKFTAMSPSFRSEAGSAGRDTRGLIRLHQFHKVEMVKFAKPDQSYDELEKMTANAENILQKLGLAYRVVALSTGDMGFSAAKTYDLEVWIPAQNTYREISSCSNCEDFQARRAQIRYRDEDGKVQLLHTLNGSGLAVGRTVAAILENYQNEDGSITVPEILRPYMGGLEVIK</sequence>
<comment type="function">
    <text evidence="1">Catalyzes the attachment of serine to tRNA(Ser). Is also able to aminoacylate tRNA(Sec) with serine, to form the misacylated tRNA L-seryl-tRNA(Sec), which will be further converted into selenocysteinyl-tRNA(Sec).</text>
</comment>
<comment type="catalytic activity">
    <reaction evidence="1">
        <text>tRNA(Ser) + L-serine + ATP = L-seryl-tRNA(Ser) + AMP + diphosphate + H(+)</text>
        <dbReference type="Rhea" id="RHEA:12292"/>
        <dbReference type="Rhea" id="RHEA-COMP:9669"/>
        <dbReference type="Rhea" id="RHEA-COMP:9703"/>
        <dbReference type="ChEBI" id="CHEBI:15378"/>
        <dbReference type="ChEBI" id="CHEBI:30616"/>
        <dbReference type="ChEBI" id="CHEBI:33019"/>
        <dbReference type="ChEBI" id="CHEBI:33384"/>
        <dbReference type="ChEBI" id="CHEBI:78442"/>
        <dbReference type="ChEBI" id="CHEBI:78533"/>
        <dbReference type="ChEBI" id="CHEBI:456215"/>
        <dbReference type="EC" id="6.1.1.11"/>
    </reaction>
</comment>
<comment type="catalytic activity">
    <reaction evidence="1">
        <text>tRNA(Sec) + L-serine + ATP = L-seryl-tRNA(Sec) + AMP + diphosphate + H(+)</text>
        <dbReference type="Rhea" id="RHEA:42580"/>
        <dbReference type="Rhea" id="RHEA-COMP:9742"/>
        <dbReference type="Rhea" id="RHEA-COMP:10128"/>
        <dbReference type="ChEBI" id="CHEBI:15378"/>
        <dbReference type="ChEBI" id="CHEBI:30616"/>
        <dbReference type="ChEBI" id="CHEBI:33019"/>
        <dbReference type="ChEBI" id="CHEBI:33384"/>
        <dbReference type="ChEBI" id="CHEBI:78442"/>
        <dbReference type="ChEBI" id="CHEBI:78533"/>
        <dbReference type="ChEBI" id="CHEBI:456215"/>
        <dbReference type="EC" id="6.1.1.11"/>
    </reaction>
</comment>
<comment type="pathway">
    <text evidence="1">Aminoacyl-tRNA biosynthesis; selenocysteinyl-tRNA(Sec) biosynthesis; L-seryl-tRNA(Sec) from L-serine and tRNA(Sec): step 1/1.</text>
</comment>
<comment type="subunit">
    <text evidence="1">Homodimer. The tRNA molecule binds across the dimer.</text>
</comment>
<comment type="subcellular location">
    <subcellularLocation>
        <location evidence="1">Cytoplasm</location>
    </subcellularLocation>
</comment>
<comment type="domain">
    <text evidence="1">Consists of two distinct domains, a catalytic core and a N-terminal extension that is involved in tRNA binding.</text>
</comment>
<comment type="similarity">
    <text evidence="1">Belongs to the class-II aminoacyl-tRNA synthetase family. Type-1 seryl-tRNA synthetase subfamily.</text>
</comment>
<accession>A2RJ76</accession>
<evidence type="ECO:0000255" key="1">
    <source>
        <dbReference type="HAMAP-Rule" id="MF_00176"/>
    </source>
</evidence>
<name>SYS_LACLM</name>
<dbReference type="EC" id="6.1.1.11" evidence="1"/>
<dbReference type="EMBL" id="AM406671">
    <property type="protein sequence ID" value="CAL97327.1"/>
    <property type="molecule type" value="Genomic_DNA"/>
</dbReference>
<dbReference type="RefSeq" id="WP_011834713.1">
    <property type="nucleotide sequence ID" value="NC_009004.1"/>
</dbReference>
<dbReference type="SMR" id="A2RJ76"/>
<dbReference type="STRING" id="416870.llmg_0722"/>
<dbReference type="KEGG" id="llm:llmg_0722"/>
<dbReference type="eggNOG" id="COG0172">
    <property type="taxonomic scope" value="Bacteria"/>
</dbReference>
<dbReference type="HOGENOM" id="CLU_023797_1_1_9"/>
<dbReference type="OrthoDB" id="9804647at2"/>
<dbReference type="PhylomeDB" id="A2RJ76"/>
<dbReference type="UniPathway" id="UPA00906">
    <property type="reaction ID" value="UER00895"/>
</dbReference>
<dbReference type="Proteomes" id="UP000000364">
    <property type="component" value="Chromosome"/>
</dbReference>
<dbReference type="GO" id="GO:0005737">
    <property type="term" value="C:cytoplasm"/>
    <property type="evidence" value="ECO:0007669"/>
    <property type="project" value="UniProtKB-SubCell"/>
</dbReference>
<dbReference type="GO" id="GO:0005524">
    <property type="term" value="F:ATP binding"/>
    <property type="evidence" value="ECO:0007669"/>
    <property type="project" value="UniProtKB-UniRule"/>
</dbReference>
<dbReference type="GO" id="GO:0140096">
    <property type="term" value="F:catalytic activity, acting on a protein"/>
    <property type="evidence" value="ECO:0007669"/>
    <property type="project" value="UniProtKB-ARBA"/>
</dbReference>
<dbReference type="GO" id="GO:0004828">
    <property type="term" value="F:serine-tRNA ligase activity"/>
    <property type="evidence" value="ECO:0007669"/>
    <property type="project" value="UniProtKB-UniRule"/>
</dbReference>
<dbReference type="GO" id="GO:0016740">
    <property type="term" value="F:transferase activity"/>
    <property type="evidence" value="ECO:0007669"/>
    <property type="project" value="UniProtKB-ARBA"/>
</dbReference>
<dbReference type="GO" id="GO:0016260">
    <property type="term" value="P:selenocysteine biosynthetic process"/>
    <property type="evidence" value="ECO:0007669"/>
    <property type="project" value="UniProtKB-UniRule"/>
</dbReference>
<dbReference type="GO" id="GO:0006434">
    <property type="term" value="P:seryl-tRNA aminoacylation"/>
    <property type="evidence" value="ECO:0007669"/>
    <property type="project" value="UniProtKB-UniRule"/>
</dbReference>
<dbReference type="CDD" id="cd00770">
    <property type="entry name" value="SerRS_core"/>
    <property type="match status" value="1"/>
</dbReference>
<dbReference type="Gene3D" id="3.30.930.10">
    <property type="entry name" value="Bira Bifunctional Protein, Domain 2"/>
    <property type="match status" value="1"/>
</dbReference>
<dbReference type="Gene3D" id="1.10.287.40">
    <property type="entry name" value="Serine-tRNA synthetase, tRNA binding domain"/>
    <property type="match status" value="1"/>
</dbReference>
<dbReference type="HAMAP" id="MF_00176">
    <property type="entry name" value="Ser_tRNA_synth_type1"/>
    <property type="match status" value="1"/>
</dbReference>
<dbReference type="InterPro" id="IPR002314">
    <property type="entry name" value="aa-tRNA-synt_IIb"/>
</dbReference>
<dbReference type="InterPro" id="IPR006195">
    <property type="entry name" value="aa-tRNA-synth_II"/>
</dbReference>
<dbReference type="InterPro" id="IPR045864">
    <property type="entry name" value="aa-tRNA-synth_II/BPL/LPL"/>
</dbReference>
<dbReference type="InterPro" id="IPR002317">
    <property type="entry name" value="Ser-tRNA-ligase_type_1"/>
</dbReference>
<dbReference type="InterPro" id="IPR015866">
    <property type="entry name" value="Ser-tRNA-synth_1_N"/>
</dbReference>
<dbReference type="InterPro" id="IPR042103">
    <property type="entry name" value="SerRS_1_N_sf"/>
</dbReference>
<dbReference type="InterPro" id="IPR033729">
    <property type="entry name" value="SerRS_core"/>
</dbReference>
<dbReference type="InterPro" id="IPR010978">
    <property type="entry name" value="tRNA-bd_arm"/>
</dbReference>
<dbReference type="NCBIfam" id="TIGR00414">
    <property type="entry name" value="serS"/>
    <property type="match status" value="1"/>
</dbReference>
<dbReference type="PANTHER" id="PTHR43697:SF1">
    <property type="entry name" value="SERINE--TRNA LIGASE"/>
    <property type="match status" value="1"/>
</dbReference>
<dbReference type="PANTHER" id="PTHR43697">
    <property type="entry name" value="SERYL-TRNA SYNTHETASE"/>
    <property type="match status" value="1"/>
</dbReference>
<dbReference type="Pfam" id="PF02403">
    <property type="entry name" value="Seryl_tRNA_N"/>
    <property type="match status" value="1"/>
</dbReference>
<dbReference type="Pfam" id="PF00587">
    <property type="entry name" value="tRNA-synt_2b"/>
    <property type="match status" value="1"/>
</dbReference>
<dbReference type="PIRSF" id="PIRSF001529">
    <property type="entry name" value="Ser-tRNA-synth_IIa"/>
    <property type="match status" value="1"/>
</dbReference>
<dbReference type="PRINTS" id="PR00981">
    <property type="entry name" value="TRNASYNTHSER"/>
</dbReference>
<dbReference type="SUPFAM" id="SSF55681">
    <property type="entry name" value="Class II aaRS and biotin synthetases"/>
    <property type="match status" value="1"/>
</dbReference>
<dbReference type="SUPFAM" id="SSF46589">
    <property type="entry name" value="tRNA-binding arm"/>
    <property type="match status" value="1"/>
</dbReference>
<dbReference type="PROSITE" id="PS50862">
    <property type="entry name" value="AA_TRNA_LIGASE_II"/>
    <property type="match status" value="1"/>
</dbReference>
<gene>
    <name evidence="1" type="primary">serS</name>
    <name type="ordered locus">llmg_0722</name>
</gene>
<protein>
    <recommendedName>
        <fullName evidence="1">Serine--tRNA ligase</fullName>
        <ecNumber evidence="1">6.1.1.11</ecNumber>
    </recommendedName>
    <alternativeName>
        <fullName evidence="1">Seryl-tRNA synthetase</fullName>
        <shortName evidence="1">SerRS</shortName>
    </alternativeName>
    <alternativeName>
        <fullName evidence="1">Seryl-tRNA(Ser/Sec) synthetase</fullName>
    </alternativeName>
</protein>